<accession>Q6DRC5</accession>
<accession>A8WFQ9</accession>
<accession>B0JZK5</accession>
<organism>
    <name type="scientific">Danio rerio</name>
    <name type="common">Zebrafish</name>
    <name type="synonym">Brachydanio rerio</name>
    <dbReference type="NCBI Taxonomy" id="7955"/>
    <lineage>
        <taxon>Eukaryota</taxon>
        <taxon>Metazoa</taxon>
        <taxon>Chordata</taxon>
        <taxon>Craniata</taxon>
        <taxon>Vertebrata</taxon>
        <taxon>Euteleostomi</taxon>
        <taxon>Actinopterygii</taxon>
        <taxon>Neopterygii</taxon>
        <taxon>Teleostei</taxon>
        <taxon>Ostariophysi</taxon>
        <taxon>Cypriniformes</taxon>
        <taxon>Danionidae</taxon>
        <taxon>Danioninae</taxon>
        <taxon>Danio</taxon>
    </lineage>
</organism>
<gene>
    <name type="primary">uspl1</name>
</gene>
<comment type="function">
    <text evidence="2 4">SUMO-specific isopeptidase involved in protein desumoylation. Specifically binds SUMO proteins with a higher affinity for sumo2 and sumo3 which it cleaves more efficiently. Also able to process full-length SUMO proteins to their mature forms (PubMed:22878415). Plays a key role in RNA polymerase-II-mediated snRNA transcription in the Cajal bodies (By similarity). Is a component of complexes that can bind to U snRNA genes (By similarity).</text>
</comment>
<comment type="interaction">
    <interactant intactId="EBI-8018150">
        <id>Q6DRC5</id>
    </interactant>
    <interactant intactId="EBI-473220">
        <id>P61956</id>
        <label>SUMO2</label>
    </interactant>
    <organismsDiffer>true</organismsDiffer>
    <experiments>2</experiments>
</comment>
<comment type="subcellular location">
    <subcellularLocation>
        <location evidence="4">Nucleus</location>
        <location evidence="4">Cajal body</location>
    </subcellularLocation>
</comment>
<comment type="similarity">
    <text evidence="5">Belongs to the peptidase C19 family.</text>
</comment>
<dbReference type="EC" id="3.4.22.-"/>
<dbReference type="EMBL" id="AY648834">
    <property type="protein sequence ID" value="AAT68152.1"/>
    <property type="molecule type" value="mRNA"/>
</dbReference>
<dbReference type="EMBL" id="BX548163">
    <property type="status" value="NOT_ANNOTATED_CDS"/>
    <property type="molecule type" value="Genomic_DNA"/>
</dbReference>
<dbReference type="EMBL" id="BC154415">
    <property type="protein sequence ID" value="AAI54416.1"/>
    <property type="molecule type" value="mRNA"/>
</dbReference>
<dbReference type="EMBL" id="BC159218">
    <property type="protein sequence ID" value="AAI59219.1"/>
    <property type="molecule type" value="mRNA"/>
</dbReference>
<dbReference type="EMBL" id="BC162319">
    <property type="protein sequence ID" value="AAI62319.1"/>
    <property type="molecule type" value="mRNA"/>
</dbReference>
<dbReference type="RefSeq" id="NP_001003880.1">
    <property type="nucleotide sequence ID" value="NM_001003880.1"/>
</dbReference>
<dbReference type="SMR" id="Q6DRC5"/>
<dbReference type="BioGRID" id="92515">
    <property type="interactions" value="2"/>
</dbReference>
<dbReference type="FunCoup" id="Q6DRC5">
    <property type="interactions" value="1349"/>
</dbReference>
<dbReference type="IntAct" id="Q6DRC5">
    <property type="interactions" value="3"/>
</dbReference>
<dbReference type="MINT" id="Q6DRC5"/>
<dbReference type="STRING" id="7955.ENSDARP00000043801"/>
<dbReference type="MEROPS" id="C98.001"/>
<dbReference type="PaxDb" id="7955-ENSDARP00000043801"/>
<dbReference type="Ensembl" id="ENSDART00000043802">
    <property type="protein sequence ID" value="ENSDARP00000043801"/>
    <property type="gene ID" value="ENSDARG00000034825"/>
</dbReference>
<dbReference type="Ensembl" id="ENSDART00000185626">
    <property type="protein sequence ID" value="ENSDARP00000145440"/>
    <property type="gene ID" value="ENSDARG00000034825"/>
</dbReference>
<dbReference type="GeneID" id="445403"/>
<dbReference type="KEGG" id="dre:445403"/>
<dbReference type="AGR" id="ZFIN:ZDB-GENE-040930-7"/>
<dbReference type="CTD" id="10208"/>
<dbReference type="ZFIN" id="ZDB-GENE-040930-7">
    <property type="gene designation" value="uspl1"/>
</dbReference>
<dbReference type="eggNOG" id="ENOG502QRFM">
    <property type="taxonomic scope" value="Eukaryota"/>
</dbReference>
<dbReference type="HOGENOM" id="CLU_296761_0_0_1"/>
<dbReference type="InParanoid" id="Q6DRC5"/>
<dbReference type="OMA" id="CEDEVTR"/>
<dbReference type="OrthoDB" id="6160353at2759"/>
<dbReference type="PhylomeDB" id="Q6DRC5"/>
<dbReference type="TreeFam" id="TF350670"/>
<dbReference type="SignaLink" id="Q6DRC5"/>
<dbReference type="PRO" id="PR:Q6DRC5"/>
<dbReference type="Proteomes" id="UP000000437">
    <property type="component" value="Alternate scaffold 10"/>
</dbReference>
<dbReference type="Proteomes" id="UP000000437">
    <property type="component" value="Chromosome 10"/>
</dbReference>
<dbReference type="Bgee" id="ENSDARG00000034825">
    <property type="expression patterns" value="Expressed in brain and 20 other cell types or tissues"/>
</dbReference>
<dbReference type="GO" id="GO:0015030">
    <property type="term" value="C:Cajal body"/>
    <property type="evidence" value="ECO:0000314"/>
    <property type="project" value="UniProtKB"/>
</dbReference>
<dbReference type="GO" id="GO:0016929">
    <property type="term" value="F:deSUMOylase activity"/>
    <property type="evidence" value="ECO:0000314"/>
    <property type="project" value="UniProtKB"/>
</dbReference>
<dbReference type="GO" id="GO:0032183">
    <property type="term" value="F:SUMO binding"/>
    <property type="evidence" value="ECO:0000314"/>
    <property type="project" value="UniProtKB"/>
</dbReference>
<dbReference type="GO" id="GO:0030576">
    <property type="term" value="P:Cajal body organization"/>
    <property type="evidence" value="ECO:0000315"/>
    <property type="project" value="UniProtKB"/>
</dbReference>
<dbReference type="GO" id="GO:0008283">
    <property type="term" value="P:cell population proliferation"/>
    <property type="evidence" value="ECO:0000250"/>
    <property type="project" value="UniProtKB"/>
</dbReference>
<dbReference type="GO" id="GO:0016926">
    <property type="term" value="P:protein desumoylation"/>
    <property type="evidence" value="ECO:0000314"/>
    <property type="project" value="UniProtKB"/>
</dbReference>
<dbReference type="GO" id="GO:1904867">
    <property type="term" value="P:protein localization to Cajal body"/>
    <property type="evidence" value="ECO:0000315"/>
    <property type="project" value="ZFIN"/>
</dbReference>
<dbReference type="GO" id="GO:0006508">
    <property type="term" value="P:proteolysis"/>
    <property type="evidence" value="ECO:0007669"/>
    <property type="project" value="UniProtKB-KW"/>
</dbReference>
<dbReference type="InterPro" id="IPR038765">
    <property type="entry name" value="Papain-like_cys_pep_sf"/>
</dbReference>
<dbReference type="InterPro" id="IPR028890">
    <property type="entry name" value="Peptidase_C98"/>
</dbReference>
<dbReference type="InterPro" id="IPR028889">
    <property type="entry name" value="USP_dom"/>
</dbReference>
<dbReference type="InterPro" id="IPR033505">
    <property type="entry name" value="USPL1"/>
</dbReference>
<dbReference type="PANTHER" id="PTHR15294">
    <property type="entry name" value="RETINOVIN-RELATED"/>
    <property type="match status" value="1"/>
</dbReference>
<dbReference type="PANTHER" id="PTHR15294:SF3">
    <property type="entry name" value="SUMO-SPECIFIC ISOPEPTIDASE USPL1"/>
    <property type="match status" value="1"/>
</dbReference>
<dbReference type="Pfam" id="PF15499">
    <property type="entry name" value="Peptidase_C98"/>
    <property type="match status" value="1"/>
</dbReference>
<dbReference type="SUPFAM" id="SSF54001">
    <property type="entry name" value="Cysteine proteinases"/>
    <property type="match status" value="1"/>
</dbReference>
<dbReference type="PROSITE" id="PS50235">
    <property type="entry name" value="USP_3"/>
    <property type="match status" value="1"/>
</dbReference>
<protein>
    <recommendedName>
        <fullName>SUMO-specific isopeptidase USPL1</fullName>
        <ecNumber>3.4.22.-</ecNumber>
    </recommendedName>
    <alternativeName>
        <fullName>Ubiquitin-specific peptidase-like protein 1</fullName>
    </alternativeName>
</protein>
<name>USPL1_DANRE</name>
<evidence type="ECO:0000250" key="1"/>
<evidence type="ECO:0000250" key="2">
    <source>
        <dbReference type="UniProtKB" id="Q5W0Q7"/>
    </source>
</evidence>
<evidence type="ECO:0000256" key="3">
    <source>
        <dbReference type="SAM" id="MobiDB-lite"/>
    </source>
</evidence>
<evidence type="ECO:0000269" key="4">
    <source>
    </source>
</evidence>
<evidence type="ECO:0000305" key="5"/>
<keyword id="KW-0378">Hydrolase</keyword>
<keyword id="KW-0539">Nucleus</keyword>
<keyword id="KW-0645">Protease</keyword>
<keyword id="KW-1185">Reference proteome</keyword>
<keyword id="KW-0788">Thiol protease</keyword>
<feature type="chain" id="PRO_0000419648" description="SUMO-specific isopeptidase USPL1">
    <location>
        <begin position="1"/>
        <end position="1014"/>
    </location>
</feature>
<feature type="domain" description="USP">
    <location>
        <begin position="355"/>
        <end position="636"/>
    </location>
</feature>
<feature type="region of interest" description="Disordered" evidence="3">
    <location>
        <begin position="137"/>
        <end position="158"/>
    </location>
</feature>
<feature type="region of interest" description="Disordered" evidence="3">
    <location>
        <begin position="275"/>
        <end position="318"/>
    </location>
</feature>
<feature type="region of interest" description="SUMO-binding" evidence="1">
    <location>
        <begin position="364"/>
        <end position="631"/>
    </location>
</feature>
<feature type="region of interest" description="Disordered" evidence="3">
    <location>
        <begin position="794"/>
        <end position="823"/>
    </location>
</feature>
<feature type="region of interest" description="Disordered" evidence="3">
    <location>
        <begin position="844"/>
        <end position="867"/>
    </location>
</feature>
<feature type="compositionally biased region" description="Basic and acidic residues" evidence="3">
    <location>
        <begin position="275"/>
        <end position="289"/>
    </location>
</feature>
<feature type="compositionally biased region" description="Pro residues" evidence="3">
    <location>
        <begin position="802"/>
        <end position="815"/>
    </location>
</feature>
<feature type="active site" description="Nucleophile" evidence="1">
    <location>
        <position position="364"/>
    </location>
</feature>
<feature type="active site" description="Proton acceptor" evidence="1">
    <location>
        <position position="592"/>
    </location>
</feature>
<feature type="sequence conflict" description="In Ref. 3; AAI54416/AAI59219." evidence="5" ref="3">
    <original>D</original>
    <variation>E</variation>
    <location>
        <position position="97"/>
    </location>
</feature>
<feature type="sequence conflict" description="In Ref. 3; AAI59219." evidence="5" ref="3">
    <original>I</original>
    <variation>T</variation>
    <location>
        <position position="149"/>
    </location>
</feature>
<feature type="sequence conflict" description="In Ref. 3; AAI59219." evidence="5" ref="3">
    <original>V</original>
    <variation>A</variation>
    <location>
        <position position="206"/>
    </location>
</feature>
<feature type="sequence conflict" description="In Ref. 3; AAI54416/AAI59219." evidence="5" ref="3">
    <original>M</original>
    <variation>I</variation>
    <location>
        <position position="209"/>
    </location>
</feature>
<feature type="sequence conflict" description="In Ref. 3; AAI54416/AAI59219." evidence="5" ref="3">
    <original>S</original>
    <variation>T</variation>
    <location>
        <position position="214"/>
    </location>
</feature>
<feature type="sequence conflict" description="In Ref. 3; AAI54416/AAI59219." evidence="5" ref="3">
    <original>F</original>
    <variation>I</variation>
    <location>
        <position position="244"/>
    </location>
</feature>
<feature type="sequence conflict" description="In Ref. 3; AAI59219." evidence="5" ref="3">
    <original>T</original>
    <variation>I</variation>
    <location>
        <position position="259"/>
    </location>
</feature>
<feature type="sequence conflict" description="In Ref. 3; AAI59219." evidence="5" ref="3">
    <original>D</original>
    <variation>V</variation>
    <location>
        <position position="262"/>
    </location>
</feature>
<feature type="sequence conflict" description="In Ref. 3; AAI59219." evidence="5" ref="3">
    <original>G</original>
    <variation>E</variation>
    <location>
        <position position="381"/>
    </location>
</feature>
<feature type="sequence conflict" description="In Ref. 3; AAI54416." evidence="5" ref="3">
    <original>I</original>
    <variation>V</variation>
    <location>
        <position position="387"/>
    </location>
</feature>
<feature type="sequence conflict" description="In Ref. 3; AAI59219." evidence="5" ref="3">
    <original>Y</original>
    <variation>D</variation>
    <location>
        <position position="416"/>
    </location>
</feature>
<feature type="sequence conflict" description="In Ref. 3; AAI59219." evidence="5" ref="3">
    <original>I</original>
    <variation>V</variation>
    <location>
        <position position="517"/>
    </location>
</feature>
<feature type="sequence conflict" description="In Ref. 3; AAI54416/AAI59219." evidence="5" ref="3">
    <original>G</original>
    <variation>E</variation>
    <location>
        <position position="570"/>
    </location>
</feature>
<feature type="sequence conflict" description="In Ref. 3; AAI54416/AAI59219." evidence="5" ref="3">
    <original>T</original>
    <variation>D</variation>
    <location>
        <position position="671"/>
    </location>
</feature>
<feature type="sequence conflict" description="In Ref. 3; AAI54416." evidence="5" ref="3">
    <original>S</original>
    <variation>N</variation>
    <location>
        <position position="688"/>
    </location>
</feature>
<feature type="sequence conflict" description="In Ref. 3; AAI54416/AAI59219." evidence="5" ref="3">
    <original>G</original>
    <variation>V</variation>
    <location>
        <position position="755"/>
    </location>
</feature>
<sequence>MNGEGTGIGAPTPALAGFLGKSKDRNASPGNCPWCLAKGQTNALRFYAVNLKETVLLCTNAVCLYPLVSRSLEEVRASLSKGGCKRSISSLPDISDDSCPPKRPREEKLDVLADVSEPCDAEVNDATLPDDTVKTQTFTDQQSAPAETISLDKTEEQPVSIEDIKEQPISHDATEGQPISIDQTEEQPVSILHTEEQPIVLDLIEVKPMSVDHSEEQPICIDNTKERPVSIVHTEEQSIVLDLFEVKPMSIAHTEEKPTSFDHIEEKPMSIAHTEEKPVSLVHTEDQHLSIDQTEEQPISIDPTEEQQPEELPAVSDEDVDLCERKEDCVSSTQDEMEEEVLESSSELVPVHSELFWKNEENMCWLDAMLVMLVHCRTIRGTPCRGIKLSDKLATVPCNDSVVWKLCWRYDKTCAYLQARKKQSEDKVLRVPAGVLVEAERRLSALRLSVFKLLQPTLKCEIGQQETPVFALPLLLRSDKWAQDIFQHTIRWEFKCTCCDFTVNESVEKTLTTLTCIVKDWHPLKANNRTQCNKCEHKNQRRKMVLEKLSSVFALHFVEGLPRKDLTKYGFTFQGFQYSVSTIIQYNKHLQHFVTWVRQSNGFWLELDDLKHPYSPTHKRLPFPSSEFHILFWETDSFKEEHSEVCLPTAPPEVPNAPDEHPPKLSDSVATDTCVISALTVEDTTASSIADTSIGSTTLLDTFEGLTHKDIVTLTLVNSESPKNEPRPMRPGFVSAPRHCPFEASNLLSGIPKTGSRLSTPPIPQKSSLVHKPEVAAAAVSKTHLQPTSLFQRHPSFQSTPIRPPPPLPPAPKPKPSLQYDKHEDLPVKPADMFGGFKTKKLANSQPKQISLPGGLNPSVKKTAGQEPISTTEALRLKLMKKLKAKKKKLAKLNQLLGNGGESVAKPDSTALSSPYSVTSSTTTYDSFDDQFLADLLSPATTVSNLSPDSTGLLEMLNNGQNGEQQNPAVATLAPEATLTCSSSTISPLDEYMQSGMCHTALENADFNSLDIFF</sequence>
<proteinExistence type="evidence at protein level"/>
<reference key="1">
    <citation type="journal article" date="2004" name="Proc. Natl. Acad. Sci. U.S.A.">
        <title>Identification of 315 genes essential for early zebrafish development.</title>
        <authorList>
            <person name="Amsterdam A."/>
            <person name="Nissen R.M."/>
            <person name="Sun Z."/>
            <person name="Swindell E.C."/>
            <person name="Farrington S."/>
            <person name="Hopkins N."/>
        </authorList>
    </citation>
    <scope>NUCLEOTIDE SEQUENCE [LARGE SCALE MRNA]</scope>
    <source>
        <tissue>Embryo</tissue>
    </source>
</reference>
<reference key="2">
    <citation type="journal article" date="2013" name="Nature">
        <title>The zebrafish reference genome sequence and its relationship to the human genome.</title>
        <authorList>
            <person name="Howe K."/>
            <person name="Clark M.D."/>
            <person name="Torroja C.F."/>
            <person name="Torrance J."/>
            <person name="Berthelot C."/>
            <person name="Muffato M."/>
            <person name="Collins J.E."/>
            <person name="Humphray S."/>
            <person name="McLaren K."/>
            <person name="Matthews L."/>
            <person name="McLaren S."/>
            <person name="Sealy I."/>
            <person name="Caccamo M."/>
            <person name="Churcher C."/>
            <person name="Scott C."/>
            <person name="Barrett J.C."/>
            <person name="Koch R."/>
            <person name="Rauch G.J."/>
            <person name="White S."/>
            <person name="Chow W."/>
            <person name="Kilian B."/>
            <person name="Quintais L.T."/>
            <person name="Guerra-Assuncao J.A."/>
            <person name="Zhou Y."/>
            <person name="Gu Y."/>
            <person name="Yen J."/>
            <person name="Vogel J.H."/>
            <person name="Eyre T."/>
            <person name="Redmond S."/>
            <person name="Banerjee R."/>
            <person name="Chi J."/>
            <person name="Fu B."/>
            <person name="Langley E."/>
            <person name="Maguire S.F."/>
            <person name="Laird G.K."/>
            <person name="Lloyd D."/>
            <person name="Kenyon E."/>
            <person name="Donaldson S."/>
            <person name="Sehra H."/>
            <person name="Almeida-King J."/>
            <person name="Loveland J."/>
            <person name="Trevanion S."/>
            <person name="Jones M."/>
            <person name="Quail M."/>
            <person name="Willey D."/>
            <person name="Hunt A."/>
            <person name="Burton J."/>
            <person name="Sims S."/>
            <person name="McLay K."/>
            <person name="Plumb B."/>
            <person name="Davis J."/>
            <person name="Clee C."/>
            <person name="Oliver K."/>
            <person name="Clark R."/>
            <person name="Riddle C."/>
            <person name="Elliot D."/>
            <person name="Threadgold G."/>
            <person name="Harden G."/>
            <person name="Ware D."/>
            <person name="Begum S."/>
            <person name="Mortimore B."/>
            <person name="Kerry G."/>
            <person name="Heath P."/>
            <person name="Phillimore B."/>
            <person name="Tracey A."/>
            <person name="Corby N."/>
            <person name="Dunn M."/>
            <person name="Johnson C."/>
            <person name="Wood J."/>
            <person name="Clark S."/>
            <person name="Pelan S."/>
            <person name="Griffiths G."/>
            <person name="Smith M."/>
            <person name="Glithero R."/>
            <person name="Howden P."/>
            <person name="Barker N."/>
            <person name="Lloyd C."/>
            <person name="Stevens C."/>
            <person name="Harley J."/>
            <person name="Holt K."/>
            <person name="Panagiotidis G."/>
            <person name="Lovell J."/>
            <person name="Beasley H."/>
            <person name="Henderson C."/>
            <person name="Gordon D."/>
            <person name="Auger K."/>
            <person name="Wright D."/>
            <person name="Collins J."/>
            <person name="Raisen C."/>
            <person name="Dyer L."/>
            <person name="Leung K."/>
            <person name="Robertson L."/>
            <person name="Ambridge K."/>
            <person name="Leongamornlert D."/>
            <person name="McGuire S."/>
            <person name="Gilderthorp R."/>
            <person name="Griffiths C."/>
            <person name="Manthravadi D."/>
            <person name="Nichol S."/>
            <person name="Barker G."/>
            <person name="Whitehead S."/>
            <person name="Kay M."/>
            <person name="Brown J."/>
            <person name="Murnane C."/>
            <person name="Gray E."/>
            <person name="Humphries M."/>
            <person name="Sycamore N."/>
            <person name="Barker D."/>
            <person name="Saunders D."/>
            <person name="Wallis J."/>
            <person name="Babbage A."/>
            <person name="Hammond S."/>
            <person name="Mashreghi-Mohammadi M."/>
            <person name="Barr L."/>
            <person name="Martin S."/>
            <person name="Wray P."/>
            <person name="Ellington A."/>
            <person name="Matthews N."/>
            <person name="Ellwood M."/>
            <person name="Woodmansey R."/>
            <person name="Clark G."/>
            <person name="Cooper J."/>
            <person name="Tromans A."/>
            <person name="Grafham D."/>
            <person name="Skuce C."/>
            <person name="Pandian R."/>
            <person name="Andrews R."/>
            <person name="Harrison E."/>
            <person name="Kimberley A."/>
            <person name="Garnett J."/>
            <person name="Fosker N."/>
            <person name="Hall R."/>
            <person name="Garner P."/>
            <person name="Kelly D."/>
            <person name="Bird C."/>
            <person name="Palmer S."/>
            <person name="Gehring I."/>
            <person name="Berger A."/>
            <person name="Dooley C.M."/>
            <person name="Ersan-Urun Z."/>
            <person name="Eser C."/>
            <person name="Geiger H."/>
            <person name="Geisler M."/>
            <person name="Karotki L."/>
            <person name="Kirn A."/>
            <person name="Konantz J."/>
            <person name="Konantz M."/>
            <person name="Oberlander M."/>
            <person name="Rudolph-Geiger S."/>
            <person name="Teucke M."/>
            <person name="Lanz C."/>
            <person name="Raddatz G."/>
            <person name="Osoegawa K."/>
            <person name="Zhu B."/>
            <person name="Rapp A."/>
            <person name="Widaa S."/>
            <person name="Langford C."/>
            <person name="Yang F."/>
            <person name="Schuster S.C."/>
            <person name="Carter N.P."/>
            <person name="Harrow J."/>
            <person name="Ning Z."/>
            <person name="Herrero J."/>
            <person name="Searle S.M."/>
            <person name="Enright A."/>
            <person name="Geisler R."/>
            <person name="Plasterk R.H."/>
            <person name="Lee C."/>
            <person name="Westerfield M."/>
            <person name="de Jong P.J."/>
            <person name="Zon L.I."/>
            <person name="Postlethwait J.H."/>
            <person name="Nusslein-Volhard C."/>
            <person name="Hubbard T.J."/>
            <person name="Roest Crollius H."/>
            <person name="Rogers J."/>
            <person name="Stemple D.L."/>
        </authorList>
    </citation>
    <scope>NUCLEOTIDE SEQUENCE [LARGE SCALE GENOMIC DNA]</scope>
    <source>
        <strain>Tuebingen</strain>
    </source>
</reference>
<reference key="3">
    <citation type="submission" date="2007-11" db="EMBL/GenBank/DDBJ databases">
        <authorList>
            <consortium name="NIH - Zebrafish Gene Collection (ZGC) project"/>
        </authorList>
    </citation>
    <scope>NUCLEOTIDE SEQUENCE [LARGE SCALE MRNA]</scope>
    <source>
        <tissue>Embryo</tissue>
    </source>
</reference>
<reference key="4">
    <citation type="journal article" date="2012" name="EMBO Rep.">
        <title>Ubiquitin-specific protease-like 1 (USPL1) is a SUMO isopeptidase with essential, non-catalytic functions.</title>
        <authorList>
            <person name="Schulz S."/>
            <person name="Chachami G."/>
            <person name="Kozaczkiewicz L."/>
            <person name="Winter U."/>
            <person name="Stankovic-Valentin N."/>
            <person name="Haas P."/>
            <person name="Hofmann K."/>
            <person name="Urlaub H."/>
            <person name="Ovaa H."/>
            <person name="Wittbrodt J."/>
            <person name="Meulmeester E."/>
            <person name="Melchior F."/>
        </authorList>
    </citation>
    <scope>FUNCTION IN PROTEIN DESUMOYLATION</scope>
    <scope>CATALYTIC ACTIVITY</scope>
    <scope>SUBCELLULAR LOCATION</scope>
</reference>